<name>LGT_SYNY3</name>
<keyword id="KW-0997">Cell inner membrane</keyword>
<keyword id="KW-1003">Cell membrane</keyword>
<keyword id="KW-0472">Membrane</keyword>
<keyword id="KW-1185">Reference proteome</keyword>
<keyword id="KW-0808">Transferase</keyword>
<keyword id="KW-0812">Transmembrane</keyword>
<keyword id="KW-1133">Transmembrane helix</keyword>
<dbReference type="EC" id="2.5.1.145" evidence="1"/>
<dbReference type="EMBL" id="BA000022">
    <property type="protein sequence ID" value="BAA16861.1"/>
    <property type="molecule type" value="Genomic_DNA"/>
</dbReference>
<dbReference type="PIR" id="S74710">
    <property type="entry name" value="S74710"/>
</dbReference>
<dbReference type="SMR" id="P72846"/>
<dbReference type="FunCoup" id="P72846">
    <property type="interactions" value="272"/>
</dbReference>
<dbReference type="IntAct" id="P72846">
    <property type="interactions" value="1"/>
</dbReference>
<dbReference type="STRING" id="1148.gene:10497719"/>
<dbReference type="PaxDb" id="1148-1651935"/>
<dbReference type="EnsemblBacteria" id="BAA16861">
    <property type="protein sequence ID" value="BAA16861"/>
    <property type="gene ID" value="BAA16861"/>
</dbReference>
<dbReference type="KEGG" id="syn:sll1187"/>
<dbReference type="eggNOG" id="COG0682">
    <property type="taxonomic scope" value="Bacteria"/>
</dbReference>
<dbReference type="InParanoid" id="P72846"/>
<dbReference type="PhylomeDB" id="P72846"/>
<dbReference type="UniPathway" id="UPA00664"/>
<dbReference type="Proteomes" id="UP000001425">
    <property type="component" value="Chromosome"/>
</dbReference>
<dbReference type="GO" id="GO:0005886">
    <property type="term" value="C:plasma membrane"/>
    <property type="evidence" value="ECO:0000318"/>
    <property type="project" value="GO_Central"/>
</dbReference>
<dbReference type="GO" id="GO:0008961">
    <property type="term" value="F:phosphatidylglycerol-prolipoprotein diacylglyceryl transferase activity"/>
    <property type="evidence" value="ECO:0000318"/>
    <property type="project" value="GO_Central"/>
</dbReference>
<dbReference type="GO" id="GO:0042158">
    <property type="term" value="P:lipoprotein biosynthetic process"/>
    <property type="evidence" value="ECO:0000318"/>
    <property type="project" value="GO_Central"/>
</dbReference>
<dbReference type="HAMAP" id="MF_01147">
    <property type="entry name" value="Lgt"/>
    <property type="match status" value="1"/>
</dbReference>
<dbReference type="InterPro" id="IPR001640">
    <property type="entry name" value="Lgt"/>
</dbReference>
<dbReference type="NCBIfam" id="TIGR00544">
    <property type="entry name" value="lgt"/>
    <property type="match status" value="1"/>
</dbReference>
<dbReference type="PANTHER" id="PTHR30589:SF0">
    <property type="entry name" value="PHOSPHATIDYLGLYCEROL--PROLIPOPROTEIN DIACYLGLYCERYL TRANSFERASE"/>
    <property type="match status" value="1"/>
</dbReference>
<dbReference type="PANTHER" id="PTHR30589">
    <property type="entry name" value="PROLIPOPROTEIN DIACYLGLYCERYL TRANSFERASE"/>
    <property type="match status" value="1"/>
</dbReference>
<dbReference type="Pfam" id="PF01790">
    <property type="entry name" value="LGT"/>
    <property type="match status" value="1"/>
</dbReference>
<dbReference type="PROSITE" id="PS01311">
    <property type="entry name" value="LGT"/>
    <property type="match status" value="1"/>
</dbReference>
<reference key="1">
    <citation type="journal article" date="1996" name="DNA Res.">
        <title>Sequence analysis of the genome of the unicellular cyanobacterium Synechocystis sp. strain PCC6803. II. Sequence determination of the entire genome and assignment of potential protein-coding regions.</title>
        <authorList>
            <person name="Kaneko T."/>
            <person name="Sato S."/>
            <person name="Kotani H."/>
            <person name="Tanaka A."/>
            <person name="Asamizu E."/>
            <person name="Nakamura Y."/>
            <person name="Miyajima N."/>
            <person name="Hirosawa M."/>
            <person name="Sugiura M."/>
            <person name="Sasamoto S."/>
            <person name="Kimura T."/>
            <person name="Hosouchi T."/>
            <person name="Matsuno A."/>
            <person name="Muraki A."/>
            <person name="Nakazaki N."/>
            <person name="Naruo K."/>
            <person name="Okumura S."/>
            <person name="Shimpo S."/>
            <person name="Takeuchi C."/>
            <person name="Wada T."/>
            <person name="Watanabe A."/>
            <person name="Yamada M."/>
            <person name="Yasuda M."/>
            <person name="Tabata S."/>
        </authorList>
    </citation>
    <scope>NUCLEOTIDE SEQUENCE [LARGE SCALE GENOMIC DNA]</scope>
    <source>
        <strain>ATCC 27184 / PCC 6803 / Kazusa</strain>
    </source>
</reference>
<gene>
    <name evidence="1" type="primary">lgt</name>
    <name type="ordered locus">sll1187</name>
</gene>
<sequence length="283" mass="32107">MIEQIFFGQFQSPGPVMFQIGGFALRWYGFLIASAVIIGLNLCQWLGQKRGINPDLFNDLVIWLVVAAIPSARLYYVAFEWPRYAQHWLNIFAIWQGGIAIHGALIGGTIAILVFSRYHQLSFWNLLDVLTPAVILGQAIGRWGNFFNSEAFGAPTNLPWKLYIPFANRPLNLTSYAYFHPTFLYESVWNLGIFAILIALFFYGLRNPEKIKTGTITCVYLIGYSLGRVWIEGLRLDSLMLGPLRIAQVVSITLVLLGTAGIVWLYLLQKNLPDWSERKLVKN</sequence>
<comment type="function">
    <text evidence="1">Catalyzes the transfer of the diacylglyceryl group from phosphatidylglycerol to the sulfhydryl group of the N-terminal cysteine of a prolipoprotein, the first step in the formation of mature lipoproteins.</text>
</comment>
<comment type="catalytic activity">
    <reaction evidence="1">
        <text>L-cysteinyl-[prolipoprotein] + a 1,2-diacyl-sn-glycero-3-phospho-(1'-sn-glycerol) = an S-1,2-diacyl-sn-glyceryl-L-cysteinyl-[prolipoprotein] + sn-glycerol 1-phosphate + H(+)</text>
        <dbReference type="Rhea" id="RHEA:56712"/>
        <dbReference type="Rhea" id="RHEA-COMP:14679"/>
        <dbReference type="Rhea" id="RHEA-COMP:14680"/>
        <dbReference type="ChEBI" id="CHEBI:15378"/>
        <dbReference type="ChEBI" id="CHEBI:29950"/>
        <dbReference type="ChEBI" id="CHEBI:57685"/>
        <dbReference type="ChEBI" id="CHEBI:64716"/>
        <dbReference type="ChEBI" id="CHEBI:140658"/>
        <dbReference type="EC" id="2.5.1.145"/>
    </reaction>
</comment>
<comment type="pathway">
    <text evidence="1">Protein modification; lipoprotein biosynthesis (diacylglyceryl transfer).</text>
</comment>
<comment type="subcellular location">
    <subcellularLocation>
        <location evidence="1">Cell inner membrane</location>
        <topology evidence="1">Multi-pass membrane protein</topology>
    </subcellularLocation>
</comment>
<comment type="similarity">
    <text evidence="1 2">Belongs to the Lgt family.</text>
</comment>
<feature type="chain" id="PRO_0000172700" description="Phosphatidylglycerol--prolipoprotein diacylglyceryl transferase">
    <location>
        <begin position="1"/>
        <end position="283"/>
    </location>
</feature>
<feature type="transmembrane region" description="Helical" evidence="1">
    <location>
        <begin position="20"/>
        <end position="40"/>
    </location>
</feature>
<feature type="transmembrane region" description="Helical" evidence="1">
    <location>
        <begin position="60"/>
        <end position="80"/>
    </location>
</feature>
<feature type="transmembrane region" description="Helical" evidence="1">
    <location>
        <begin position="94"/>
        <end position="114"/>
    </location>
</feature>
<feature type="transmembrane region" description="Helical" evidence="1">
    <location>
        <begin position="121"/>
        <end position="141"/>
    </location>
</feature>
<feature type="transmembrane region" description="Helical" evidence="1">
    <location>
        <begin position="183"/>
        <end position="203"/>
    </location>
</feature>
<feature type="transmembrane region" description="Helical" evidence="1">
    <location>
        <begin position="214"/>
        <end position="234"/>
    </location>
</feature>
<feature type="transmembrane region" description="Helical" evidence="1">
    <location>
        <begin position="248"/>
        <end position="268"/>
    </location>
</feature>
<feature type="binding site" evidence="1">
    <location>
        <position position="142"/>
    </location>
    <ligand>
        <name>a 1,2-diacyl-sn-glycero-3-phospho-(1'-sn-glycerol)</name>
        <dbReference type="ChEBI" id="CHEBI:64716"/>
    </ligand>
</feature>
<proteinExistence type="inferred from homology"/>
<evidence type="ECO:0000255" key="1">
    <source>
        <dbReference type="HAMAP-Rule" id="MF_01147"/>
    </source>
</evidence>
<evidence type="ECO:0000305" key="2"/>
<protein>
    <recommendedName>
        <fullName evidence="1">Phosphatidylglycerol--prolipoprotein diacylglyceryl transferase</fullName>
        <ecNumber evidence="1">2.5.1.145</ecNumber>
    </recommendedName>
</protein>
<organism>
    <name type="scientific">Synechocystis sp. (strain ATCC 27184 / PCC 6803 / Kazusa)</name>
    <dbReference type="NCBI Taxonomy" id="1111708"/>
    <lineage>
        <taxon>Bacteria</taxon>
        <taxon>Bacillati</taxon>
        <taxon>Cyanobacteriota</taxon>
        <taxon>Cyanophyceae</taxon>
        <taxon>Synechococcales</taxon>
        <taxon>Merismopediaceae</taxon>
        <taxon>Synechocystis</taxon>
    </lineage>
</organism>
<accession>P72846</accession>